<evidence type="ECO:0000255" key="1">
    <source>
        <dbReference type="HAMAP-Rule" id="MF_00443"/>
    </source>
</evidence>
<protein>
    <recommendedName>
        <fullName evidence="1">Thiazole synthase</fullName>
        <ecNumber evidence="1">2.8.1.10</ecNumber>
    </recommendedName>
</protein>
<name>THIG_ALKEH</name>
<reference key="1">
    <citation type="submission" date="2006-08" db="EMBL/GenBank/DDBJ databases">
        <title>Complete sequence of Alkalilimnicola ehrilichei MLHE-1.</title>
        <authorList>
            <person name="Copeland A."/>
            <person name="Lucas S."/>
            <person name="Lapidus A."/>
            <person name="Barry K."/>
            <person name="Detter J.C."/>
            <person name="Glavina del Rio T."/>
            <person name="Hammon N."/>
            <person name="Israni S."/>
            <person name="Dalin E."/>
            <person name="Tice H."/>
            <person name="Pitluck S."/>
            <person name="Sims D."/>
            <person name="Brettin T."/>
            <person name="Bruce D."/>
            <person name="Han C."/>
            <person name="Tapia R."/>
            <person name="Gilna P."/>
            <person name="Schmutz J."/>
            <person name="Larimer F."/>
            <person name="Land M."/>
            <person name="Hauser L."/>
            <person name="Kyrpides N."/>
            <person name="Mikhailova N."/>
            <person name="Oremland R.S."/>
            <person name="Hoeft S.E."/>
            <person name="Switzer-Blum J."/>
            <person name="Kulp T."/>
            <person name="King G."/>
            <person name="Tabita R."/>
            <person name="Witte B."/>
            <person name="Santini J.M."/>
            <person name="Basu P."/>
            <person name="Hollibaugh J.T."/>
            <person name="Xie G."/>
            <person name="Stolz J.F."/>
            <person name="Richardson P."/>
        </authorList>
    </citation>
    <scope>NUCLEOTIDE SEQUENCE [LARGE SCALE GENOMIC DNA]</scope>
    <source>
        <strain>ATCC BAA-1101 / DSM 17681 / MLHE-1</strain>
    </source>
</reference>
<proteinExistence type="inferred from homology"/>
<keyword id="KW-0963">Cytoplasm</keyword>
<keyword id="KW-1185">Reference proteome</keyword>
<keyword id="KW-0704">Schiff base</keyword>
<keyword id="KW-0784">Thiamine biosynthesis</keyword>
<keyword id="KW-0808">Transferase</keyword>
<gene>
    <name evidence="1" type="primary">thiG</name>
    <name type="ordered locus">Mlg_0034</name>
</gene>
<dbReference type="EC" id="2.8.1.10" evidence="1"/>
<dbReference type="EMBL" id="CP000453">
    <property type="protein sequence ID" value="ABI55393.1"/>
    <property type="molecule type" value="Genomic_DNA"/>
</dbReference>
<dbReference type="RefSeq" id="WP_011627789.1">
    <property type="nucleotide sequence ID" value="NC_008340.1"/>
</dbReference>
<dbReference type="SMR" id="Q0ACP4"/>
<dbReference type="KEGG" id="aeh:Mlg_0034"/>
<dbReference type="eggNOG" id="COG2022">
    <property type="taxonomic scope" value="Bacteria"/>
</dbReference>
<dbReference type="HOGENOM" id="CLU_062233_1_1_6"/>
<dbReference type="OrthoDB" id="9805935at2"/>
<dbReference type="UniPathway" id="UPA00060"/>
<dbReference type="Proteomes" id="UP000001962">
    <property type="component" value="Chromosome"/>
</dbReference>
<dbReference type="GO" id="GO:0005737">
    <property type="term" value="C:cytoplasm"/>
    <property type="evidence" value="ECO:0007669"/>
    <property type="project" value="UniProtKB-SubCell"/>
</dbReference>
<dbReference type="GO" id="GO:1990107">
    <property type="term" value="F:thiazole synthase activity"/>
    <property type="evidence" value="ECO:0007669"/>
    <property type="project" value="UniProtKB-EC"/>
</dbReference>
<dbReference type="GO" id="GO:0009229">
    <property type="term" value="P:thiamine diphosphate biosynthetic process"/>
    <property type="evidence" value="ECO:0007669"/>
    <property type="project" value="UniProtKB-UniRule"/>
</dbReference>
<dbReference type="CDD" id="cd04728">
    <property type="entry name" value="ThiG"/>
    <property type="match status" value="1"/>
</dbReference>
<dbReference type="FunFam" id="3.20.20.70:FF:000049">
    <property type="entry name" value="Thiazole synthase"/>
    <property type="match status" value="1"/>
</dbReference>
<dbReference type="Gene3D" id="3.20.20.70">
    <property type="entry name" value="Aldolase class I"/>
    <property type="match status" value="1"/>
</dbReference>
<dbReference type="HAMAP" id="MF_00443">
    <property type="entry name" value="ThiG"/>
    <property type="match status" value="1"/>
</dbReference>
<dbReference type="InterPro" id="IPR013785">
    <property type="entry name" value="Aldolase_TIM"/>
</dbReference>
<dbReference type="InterPro" id="IPR033983">
    <property type="entry name" value="Thiazole_synthase_ThiG"/>
</dbReference>
<dbReference type="InterPro" id="IPR008867">
    <property type="entry name" value="ThiG"/>
</dbReference>
<dbReference type="PANTHER" id="PTHR34266">
    <property type="entry name" value="THIAZOLE SYNTHASE"/>
    <property type="match status" value="1"/>
</dbReference>
<dbReference type="PANTHER" id="PTHR34266:SF2">
    <property type="entry name" value="THIAZOLE SYNTHASE"/>
    <property type="match status" value="1"/>
</dbReference>
<dbReference type="Pfam" id="PF05690">
    <property type="entry name" value="ThiG"/>
    <property type="match status" value="1"/>
</dbReference>
<dbReference type="SUPFAM" id="SSF110399">
    <property type="entry name" value="ThiG-like"/>
    <property type="match status" value="1"/>
</dbReference>
<feature type="chain" id="PRO_1000025990" description="Thiazole synthase">
    <location>
        <begin position="1"/>
        <end position="262"/>
    </location>
</feature>
<feature type="active site" description="Schiff-base intermediate with DXP" evidence="1">
    <location>
        <position position="104"/>
    </location>
</feature>
<feature type="binding site" evidence="1">
    <location>
        <position position="165"/>
    </location>
    <ligand>
        <name>1-deoxy-D-xylulose 5-phosphate</name>
        <dbReference type="ChEBI" id="CHEBI:57792"/>
    </ligand>
</feature>
<feature type="binding site" evidence="1">
    <location>
        <begin position="191"/>
        <end position="192"/>
    </location>
    <ligand>
        <name>1-deoxy-D-xylulose 5-phosphate</name>
        <dbReference type="ChEBI" id="CHEBI:57792"/>
    </ligand>
</feature>
<feature type="binding site" evidence="1">
    <location>
        <begin position="213"/>
        <end position="214"/>
    </location>
    <ligand>
        <name>1-deoxy-D-xylulose 5-phosphate</name>
        <dbReference type="ChEBI" id="CHEBI:57792"/>
    </ligand>
</feature>
<comment type="function">
    <text evidence="1">Catalyzes the rearrangement of 1-deoxy-D-xylulose 5-phosphate (DXP) to produce the thiazole phosphate moiety of thiamine. Sulfur is provided by the thiocarboxylate moiety of the carrier protein ThiS. In vitro, sulfur can be provided by H(2)S.</text>
</comment>
<comment type="catalytic activity">
    <reaction evidence="1">
        <text>[ThiS sulfur-carrier protein]-C-terminal-Gly-aminoethanethioate + 2-iminoacetate + 1-deoxy-D-xylulose 5-phosphate = [ThiS sulfur-carrier protein]-C-terminal Gly-Gly + 2-[(2R,5Z)-2-carboxy-4-methylthiazol-5(2H)-ylidene]ethyl phosphate + 2 H2O + H(+)</text>
        <dbReference type="Rhea" id="RHEA:26297"/>
        <dbReference type="Rhea" id="RHEA-COMP:12909"/>
        <dbReference type="Rhea" id="RHEA-COMP:19908"/>
        <dbReference type="ChEBI" id="CHEBI:15377"/>
        <dbReference type="ChEBI" id="CHEBI:15378"/>
        <dbReference type="ChEBI" id="CHEBI:57792"/>
        <dbReference type="ChEBI" id="CHEBI:62899"/>
        <dbReference type="ChEBI" id="CHEBI:77846"/>
        <dbReference type="ChEBI" id="CHEBI:90778"/>
        <dbReference type="ChEBI" id="CHEBI:232372"/>
        <dbReference type="EC" id="2.8.1.10"/>
    </reaction>
</comment>
<comment type="pathway">
    <text evidence="1">Cofactor biosynthesis; thiamine diphosphate biosynthesis.</text>
</comment>
<comment type="subunit">
    <text evidence="1">Homotetramer. Forms heterodimers with either ThiH or ThiS.</text>
</comment>
<comment type="subcellular location">
    <subcellularLocation>
        <location evidence="1">Cytoplasm</location>
    </subcellularLocation>
</comment>
<comment type="similarity">
    <text evidence="1">Belongs to the ThiG family.</text>
</comment>
<sequence>MEASQDTFTVAGRTFQSRLLVGTGKYRDLDETREAIEVSGAEIVTVAIRRTNIGQNPDEPNLLDVISPERYTLLPNTAGCYTAKDAVRTCRLARELLDGHNLVKLEVLGDEKTLYPDIPATLEAAEQLVADGFDVMVYTSDDPITAKRLEEVGCVAVMPLGAPIGSGLGIQNHWNILTIVENASVPVLVDAGVGTASDASEAMELGCDGVLMNTAIAGAQRPVLMASAMRKAVEAGREAYLAGRIPRKRFASASSPLEGTFF</sequence>
<accession>Q0ACP4</accession>
<organism>
    <name type="scientific">Alkalilimnicola ehrlichii (strain ATCC BAA-1101 / DSM 17681 / MLHE-1)</name>
    <dbReference type="NCBI Taxonomy" id="187272"/>
    <lineage>
        <taxon>Bacteria</taxon>
        <taxon>Pseudomonadati</taxon>
        <taxon>Pseudomonadota</taxon>
        <taxon>Gammaproteobacteria</taxon>
        <taxon>Chromatiales</taxon>
        <taxon>Ectothiorhodospiraceae</taxon>
        <taxon>Alkalilimnicola</taxon>
    </lineage>
</organism>